<proteinExistence type="evidence at protein level"/>
<accession>Q8WZJ4</accession>
<protein>
    <recommendedName>
        <fullName>1,4-beta-D-glucan cellobiohydrolase xynA</fullName>
        <ecNumber>3.2.1.91</ecNumber>
    </recommendedName>
    <alternativeName>
        <fullName>Beta-glucancellobiohydrolase xynA</fullName>
    </alternativeName>
    <alternativeName>
        <fullName>Exocellobiohydrolase xynA</fullName>
    </alternativeName>
    <alternativeName>
        <fullName>Exoglucanase xynA</fullName>
    </alternativeName>
</protein>
<evidence type="ECO:0000250" key="1"/>
<evidence type="ECO:0000255" key="2"/>
<evidence type="ECO:0000255" key="3">
    <source>
        <dbReference type="PROSITE-ProRule" id="PRU00597"/>
    </source>
</evidence>
<evidence type="ECO:0000256" key="4">
    <source>
        <dbReference type="SAM" id="MobiDB-lite"/>
    </source>
</evidence>
<evidence type="ECO:0000269" key="5">
    <source>
    </source>
</evidence>
<evidence type="ECO:0000269" key="6">
    <source>
    </source>
</evidence>
<evidence type="ECO:0000305" key="7"/>
<evidence type="ECO:0000305" key="8">
    <source>
    </source>
</evidence>
<evidence type="ECO:0000305" key="9">
    <source>
    </source>
</evidence>
<gene>
    <name type="primary">xynA</name>
</gene>
<name>XYNA_TALFU</name>
<dbReference type="EC" id="3.2.1.91"/>
<dbReference type="EMBL" id="AJ312295">
    <property type="protein sequence ID" value="CAC85737.1"/>
    <property type="molecule type" value="Genomic_DNA"/>
</dbReference>
<dbReference type="SMR" id="Q8WZJ4"/>
<dbReference type="CAZy" id="CBM1">
    <property type="family name" value="Carbohydrate-Binding Module Family 1"/>
</dbReference>
<dbReference type="CAZy" id="GH7">
    <property type="family name" value="Glycoside Hydrolase Family 7"/>
</dbReference>
<dbReference type="GlyCosmos" id="Q8WZJ4">
    <property type="glycosylation" value="4 sites, No reported glycans"/>
</dbReference>
<dbReference type="GO" id="GO:0005576">
    <property type="term" value="C:extracellular region"/>
    <property type="evidence" value="ECO:0007669"/>
    <property type="project" value="UniProtKB-SubCell"/>
</dbReference>
<dbReference type="GO" id="GO:0016162">
    <property type="term" value="F:cellulose 1,4-beta-cellobiosidase activity"/>
    <property type="evidence" value="ECO:0007669"/>
    <property type="project" value="UniProtKB-EC"/>
</dbReference>
<dbReference type="GO" id="GO:0030248">
    <property type="term" value="F:cellulose binding"/>
    <property type="evidence" value="ECO:0007669"/>
    <property type="project" value="InterPro"/>
</dbReference>
<dbReference type="GO" id="GO:0030245">
    <property type="term" value="P:cellulose catabolic process"/>
    <property type="evidence" value="ECO:0007669"/>
    <property type="project" value="UniProtKB-KW"/>
</dbReference>
<dbReference type="CDD" id="cd07999">
    <property type="entry name" value="GH7_CBH_EG"/>
    <property type="match status" value="1"/>
</dbReference>
<dbReference type="FunFam" id="2.70.100.10:FF:000001">
    <property type="entry name" value="Glucanase"/>
    <property type="match status" value="1"/>
</dbReference>
<dbReference type="Gene3D" id="2.70.100.10">
    <property type="entry name" value="Glycoside hydrolase, family 7, domain"/>
    <property type="match status" value="1"/>
</dbReference>
<dbReference type="InterPro" id="IPR035971">
    <property type="entry name" value="CBD_sf"/>
</dbReference>
<dbReference type="InterPro" id="IPR000254">
    <property type="entry name" value="Cellulose-bd_dom_fun"/>
</dbReference>
<dbReference type="InterPro" id="IPR013320">
    <property type="entry name" value="ConA-like_dom_sf"/>
</dbReference>
<dbReference type="InterPro" id="IPR001722">
    <property type="entry name" value="Glyco_hydro_7"/>
</dbReference>
<dbReference type="InterPro" id="IPR037019">
    <property type="entry name" value="Glyco_hydro_7_sf"/>
</dbReference>
<dbReference type="PANTHER" id="PTHR33753">
    <property type="entry name" value="1,4-BETA-D-GLUCAN CELLOBIOHYDROLASE B"/>
    <property type="match status" value="1"/>
</dbReference>
<dbReference type="PANTHER" id="PTHR33753:SF2">
    <property type="entry name" value="GLYCOSIDE HYDROLASE FAMILY 7 PROTEIN"/>
    <property type="match status" value="1"/>
</dbReference>
<dbReference type="Pfam" id="PF00734">
    <property type="entry name" value="CBM_1"/>
    <property type="match status" value="1"/>
</dbReference>
<dbReference type="Pfam" id="PF00840">
    <property type="entry name" value="Glyco_hydro_7"/>
    <property type="match status" value="1"/>
</dbReference>
<dbReference type="PRINTS" id="PR00734">
    <property type="entry name" value="GLHYDRLASE7"/>
</dbReference>
<dbReference type="SMART" id="SM00236">
    <property type="entry name" value="fCBD"/>
    <property type="match status" value="1"/>
</dbReference>
<dbReference type="SUPFAM" id="SSF57180">
    <property type="entry name" value="Cellulose-binding domain"/>
    <property type="match status" value="1"/>
</dbReference>
<dbReference type="SUPFAM" id="SSF49899">
    <property type="entry name" value="Concanavalin A-like lectins/glucanases"/>
    <property type="match status" value="1"/>
</dbReference>
<dbReference type="PROSITE" id="PS00562">
    <property type="entry name" value="CBM1_1"/>
    <property type="match status" value="1"/>
</dbReference>
<dbReference type="PROSITE" id="PS51164">
    <property type="entry name" value="CBM1_2"/>
    <property type="match status" value="1"/>
</dbReference>
<keyword id="KW-0119">Carbohydrate metabolism</keyword>
<keyword id="KW-0136">Cellulose degradation</keyword>
<keyword id="KW-0903">Direct protein sequencing</keyword>
<keyword id="KW-1015">Disulfide bond</keyword>
<keyword id="KW-0325">Glycoprotein</keyword>
<keyword id="KW-0326">Glycosidase</keyword>
<keyword id="KW-0378">Hydrolase</keyword>
<keyword id="KW-0624">Polysaccharide degradation</keyword>
<keyword id="KW-0964">Secreted</keyword>
<keyword id="KW-0732">Signal</keyword>
<reference key="1">
    <citation type="journal article" date="2003" name="Appl. Microbiol. Biotechnol.">
        <title>Comparison of modular and non-modular xylanases as carrier proteins for the efficient secretion of heterologous proteins from Penicillium funiculosum.</title>
        <authorList>
            <person name="Alcocer M.J."/>
            <person name="Furniss C.S.M."/>
            <person name="Kroon P.A."/>
            <person name="Campbell M."/>
            <person name="Archer D.B."/>
        </authorList>
    </citation>
    <scope>NUCLEOTIDE SEQUENCE [GENOMIC DNA]</scope>
    <scope>PROTEIN SEQUENCE OF 118-129 AND 274-288</scope>
    <scope>SUBCELLULAR LOCATION</scope>
    <source>
        <strain>IMI 134756</strain>
    </source>
</reference>
<reference key="2">
    <citation type="journal article" date="2012" name="J. Ind. Microbiol. Biotechnol.">
        <title>Redefining XynA from Penicillium funiculosum IMI 378536 as a GH7 cellobiohydrolase.</title>
        <authorList>
            <person name="Texier H."/>
            <person name="Dumon C."/>
            <person name="Neugnot-Roux V."/>
            <person name="Maestracci M."/>
            <person name="O'Donohue M.J."/>
        </authorList>
    </citation>
    <scope>FUNCTION</scope>
    <scope>CATALYTIC ACTIVITY</scope>
    <scope>BIOPHYSICOCHEMICAL PROPERTIES</scope>
    <scope>ACTIVITY REGULATION</scope>
</reference>
<feature type="signal peptide" evidence="2">
    <location>
        <begin position="1"/>
        <end position="25"/>
    </location>
</feature>
<feature type="chain" id="PRO_5000067499" description="1,4-beta-D-glucan cellobiohydrolase xynA">
    <location>
        <begin position="26"/>
        <end position="529"/>
    </location>
</feature>
<feature type="domain" description="CBM1" evidence="3">
    <location>
        <begin position="493"/>
        <end position="529"/>
    </location>
</feature>
<feature type="region of interest" description="Catalytic" evidence="1">
    <location>
        <begin position="26"/>
        <end position="456"/>
    </location>
</feature>
<feature type="region of interest" description="Disordered" evidence="4">
    <location>
        <begin position="413"/>
        <end position="438"/>
    </location>
</feature>
<feature type="region of interest" description="Thr-rich linker" evidence="1">
    <location>
        <begin position="457"/>
        <end position="493"/>
    </location>
</feature>
<feature type="region of interest" description="Disordered" evidence="4">
    <location>
        <begin position="460"/>
        <end position="491"/>
    </location>
</feature>
<feature type="compositionally biased region" description="Polar residues" evidence="4">
    <location>
        <begin position="425"/>
        <end position="438"/>
    </location>
</feature>
<feature type="active site" description="Nucleophile" evidence="1">
    <location>
        <position position="234"/>
    </location>
</feature>
<feature type="active site" description="Proton donor" evidence="1">
    <location>
        <position position="239"/>
    </location>
</feature>
<feature type="glycosylation site" description="N-linked (GlcNAc...) asparagine" evidence="2">
    <location>
        <position position="70"/>
    </location>
</feature>
<feature type="glycosylation site" description="N-linked (GlcNAc...) asparagine" evidence="2">
    <location>
        <position position="219"/>
    </location>
</feature>
<feature type="glycosylation site" description="N-linked (GlcNAc...) asparagine" evidence="2">
    <location>
        <position position="413"/>
    </location>
</feature>
<feature type="glycosylation site" description="N-linked (GlcNAc...) asparagine" evidence="2">
    <location>
        <position position="455"/>
    </location>
</feature>
<feature type="disulfide bond" evidence="1">
    <location>
        <begin position="501"/>
        <end position="518"/>
    </location>
</feature>
<feature type="disulfide bond" evidence="1">
    <location>
        <begin position="512"/>
        <end position="528"/>
    </location>
</feature>
<organism>
    <name type="scientific">Talaromyces funiculosus</name>
    <name type="common">Fruitlet core rot fungus</name>
    <name type="synonym">Penicillium funiculosum</name>
    <dbReference type="NCBI Taxonomy" id="28572"/>
    <lineage>
        <taxon>Eukaryota</taxon>
        <taxon>Fungi</taxon>
        <taxon>Dikarya</taxon>
        <taxon>Ascomycota</taxon>
        <taxon>Pezizomycotina</taxon>
        <taxon>Eurotiomycetes</taxon>
        <taxon>Eurotiomycetidae</taxon>
        <taxon>Eurotiales</taxon>
        <taxon>Trichocomaceae</taxon>
        <taxon>Talaromyces</taxon>
        <taxon>Talaromyces sect. Talaromyces</taxon>
    </lineage>
</organism>
<sequence length="529" mass="55048">MSALNSFNMYKSALILGSLLATAGAQQIGTYTAETHPSLSWSTCKSGGSCTTNSGAITLDANWRWVHGVNTSTNCYTGNTWNTAICDTDASCAQDCALDGADYSGTYGITTSGNSLRLNFVTGSNVGSRTYLMADNTHYQIFDLLNQEFTFTVDVSNLPCGLNGALYFVTMDADGGVSKYPNNKAGAQYGVGYCDSQCPRDLKFIAGQANVEGWTPSTNNSNTGIGNHGSCCAELDIWEANSISEALTPHPCDTPGLTVCTADDCGGTYSSNRYAGTCDPDGCDFNPYRLGVTDFYGSGKTVDTTKPFTVVTQFVTDDGTSSGSLSEIRRYYVQNGVVIPQPSSKISGISGNVINSDFCAAELSAFGETASFTNHGGLKNMGSALEAGMVLVMSLWDDYSVNMLWLDSTYPANETGTPGAARGSCPTTSGNPKTVESQSGSSYVVFSDIKVGPFNSTFSGGTSTGGSTTTTASGTTSTKASTTSTSSTSTGTGVAAHWGQCGGQGWTGPTTCASGTTCTVVNPYYSQCL</sequence>
<comment type="function">
    <text evidence="6">The biological conversion of cellulose to glucose generally requires three types of hydrolytic enzymes: (1) Endoglucanases which cut internal beta-1,4-glucosidic bonds; (2) Exocellobiohydrolases that cut the disaccharide cellobiose from the non-reducing end of the cellulose polymer chain; (3) Beta-1,4-glucosidases which hydrolyze the cellobiose and other short cello-oligosaccharides to glucose.</text>
</comment>
<comment type="catalytic activity">
    <reaction evidence="6">
        <text>Hydrolysis of (1-&gt;4)-beta-D-glucosidic linkages in cellulose and cellotetraose, releasing cellobiose from the non-reducing ends of the chains.</text>
        <dbReference type="EC" id="3.2.1.91"/>
    </reaction>
</comment>
<comment type="activity regulation">
    <text evidence="6">Cellobiose inhibits xynA at high concentrations.</text>
</comment>
<comment type="biophysicochemical properties">
    <kinetics>
        <KM evidence="6">0.238 mM for 4-nitrophenyl-beta-D-cellobioside</KM>
        <KM evidence="6">0.57 mM for 4-nitrophenyl-beta-D-lactopyranoside</KM>
    </kinetics>
    <phDependence>
        <text evidence="6">Optimum pH is 3.0-4.5.</text>
    </phDependence>
    <temperatureDependence>
        <text evidence="6">Optimum temperature is 55 degrees Celsius.</text>
    </temperatureDependence>
</comment>
<comment type="subcellular location">
    <subcellularLocation>
        <location evidence="5">Secreted</location>
    </subcellularLocation>
</comment>
<comment type="similarity">
    <text evidence="7">Belongs to the glycosyl hydrolase 7 (cellulase C) family.</text>
</comment>
<comment type="caution">
    <text evidence="8 9">Was originally identified as a 1,4-beta-D-xylan xylanohydrolase (PubMed:12664153). However, further sequence comparisons and enzymatic studies showed that xynA was principally an 1,4-beta-D-glucan cellobiohydrolase (PubMed:22776993).</text>
</comment>